<evidence type="ECO:0000255" key="1">
    <source>
        <dbReference type="HAMAP-Rule" id="MF_00375"/>
    </source>
</evidence>
<proteinExistence type="inferred from homology"/>
<name>GSA_CLOK5</name>
<protein>
    <recommendedName>
        <fullName evidence="1">Glutamate-1-semialdehyde 2,1-aminomutase</fullName>
        <shortName evidence="1">GSA</shortName>
        <ecNumber evidence="1">5.4.3.8</ecNumber>
    </recommendedName>
    <alternativeName>
        <fullName evidence="1">Glutamate-1-semialdehyde aminotransferase</fullName>
        <shortName evidence="1">GSA-AT</shortName>
    </alternativeName>
</protein>
<comment type="catalytic activity">
    <reaction evidence="1">
        <text>(S)-4-amino-5-oxopentanoate = 5-aminolevulinate</text>
        <dbReference type="Rhea" id="RHEA:14265"/>
        <dbReference type="ChEBI" id="CHEBI:57501"/>
        <dbReference type="ChEBI" id="CHEBI:356416"/>
        <dbReference type="EC" id="5.4.3.8"/>
    </reaction>
</comment>
<comment type="cofactor">
    <cofactor evidence="1">
        <name>pyridoxal 5'-phosphate</name>
        <dbReference type="ChEBI" id="CHEBI:597326"/>
    </cofactor>
</comment>
<comment type="pathway">
    <text evidence="1">Porphyrin-containing compound metabolism; protoporphyrin-IX biosynthesis; 5-aminolevulinate from L-glutamyl-tRNA(Glu): step 2/2.</text>
</comment>
<comment type="subunit">
    <text evidence="1">Homodimer.</text>
</comment>
<comment type="subcellular location">
    <subcellularLocation>
        <location evidence="1">Cytoplasm</location>
    </subcellularLocation>
</comment>
<comment type="similarity">
    <text evidence="1">Belongs to the class-III pyridoxal-phosphate-dependent aminotransferase family. HemL subfamily.</text>
</comment>
<sequence length="422" mass="46726">MRNDKIFEESKLYMPGGVNSPVRAFKDVPLNPPVIKKGRGAYIYDEDGNEYIDFVCSWGPMILGHCDEDVVNAIKYTSENAISFGATTKIELELSKYICTTMDNIEMIRMVNSGTEATMSAVKLARGYTRRNKIIKFSGCYHGHFDDFLVEAGSGVMTEGIPGSAGVPKDSIKNTIIAEYNNLEDVKNIFNKYGSDTAAIIVEPVAGNMGVIPGRIDFLKGLRKLCDEYGSLLIFDEVMSGFRVAYKGAQSLYGIKPDITTMAKIMGGGLPCGAYGGRKDIMENLSPLGPVYQAGTMSGNPIVMAAGLATLKKLNENPDYYVKLEKLGKKLEKGIKQISKDKNIPMVINRCGAMFSIFFTSDSEVKNYKDARKCDTTIFAKFFQHMLERGIYIAPSQFEAIFLNVKHTEEHIDKFLQAVNTF</sequence>
<feature type="chain" id="PRO_1000079918" description="Glutamate-1-semialdehyde 2,1-aminomutase">
    <location>
        <begin position="1"/>
        <end position="422"/>
    </location>
</feature>
<feature type="modified residue" description="N6-(pyridoxal phosphate)lysine" evidence="1">
    <location>
        <position position="264"/>
    </location>
</feature>
<keyword id="KW-0963">Cytoplasm</keyword>
<keyword id="KW-0413">Isomerase</keyword>
<keyword id="KW-0627">Porphyrin biosynthesis</keyword>
<keyword id="KW-0663">Pyridoxal phosphate</keyword>
<keyword id="KW-1185">Reference proteome</keyword>
<organism>
    <name type="scientific">Clostridium kluyveri (strain ATCC 8527 / DSM 555 / NBRC 12016 / NCIMB 10680 / K1)</name>
    <dbReference type="NCBI Taxonomy" id="431943"/>
    <lineage>
        <taxon>Bacteria</taxon>
        <taxon>Bacillati</taxon>
        <taxon>Bacillota</taxon>
        <taxon>Clostridia</taxon>
        <taxon>Eubacteriales</taxon>
        <taxon>Clostridiaceae</taxon>
        <taxon>Clostridium</taxon>
    </lineage>
</organism>
<dbReference type="EC" id="5.4.3.8" evidence="1"/>
<dbReference type="EMBL" id="CP000673">
    <property type="protein sequence ID" value="EDK32712.1"/>
    <property type="molecule type" value="Genomic_DNA"/>
</dbReference>
<dbReference type="RefSeq" id="WP_011989227.1">
    <property type="nucleotide sequence ID" value="NC_009706.1"/>
</dbReference>
<dbReference type="SMR" id="A5N5Y1"/>
<dbReference type="STRING" id="431943.CKL_0658"/>
<dbReference type="KEGG" id="ckl:CKL_0658"/>
<dbReference type="eggNOG" id="COG0001">
    <property type="taxonomic scope" value="Bacteria"/>
</dbReference>
<dbReference type="HOGENOM" id="CLU_016922_1_5_9"/>
<dbReference type="UniPathway" id="UPA00251">
    <property type="reaction ID" value="UER00317"/>
</dbReference>
<dbReference type="Proteomes" id="UP000002411">
    <property type="component" value="Chromosome"/>
</dbReference>
<dbReference type="GO" id="GO:0005737">
    <property type="term" value="C:cytoplasm"/>
    <property type="evidence" value="ECO:0007669"/>
    <property type="project" value="UniProtKB-SubCell"/>
</dbReference>
<dbReference type="GO" id="GO:0042286">
    <property type="term" value="F:glutamate-1-semialdehyde 2,1-aminomutase activity"/>
    <property type="evidence" value="ECO:0007669"/>
    <property type="project" value="UniProtKB-UniRule"/>
</dbReference>
<dbReference type="GO" id="GO:0030170">
    <property type="term" value="F:pyridoxal phosphate binding"/>
    <property type="evidence" value="ECO:0007669"/>
    <property type="project" value="InterPro"/>
</dbReference>
<dbReference type="GO" id="GO:0008483">
    <property type="term" value="F:transaminase activity"/>
    <property type="evidence" value="ECO:0007669"/>
    <property type="project" value="InterPro"/>
</dbReference>
<dbReference type="GO" id="GO:0006782">
    <property type="term" value="P:protoporphyrinogen IX biosynthetic process"/>
    <property type="evidence" value="ECO:0007669"/>
    <property type="project" value="UniProtKB-UniRule"/>
</dbReference>
<dbReference type="CDD" id="cd00610">
    <property type="entry name" value="OAT_like"/>
    <property type="match status" value="1"/>
</dbReference>
<dbReference type="FunFam" id="3.40.640.10:FF:000021">
    <property type="entry name" value="Glutamate-1-semialdehyde 2,1-aminomutase"/>
    <property type="match status" value="1"/>
</dbReference>
<dbReference type="Gene3D" id="3.90.1150.10">
    <property type="entry name" value="Aspartate Aminotransferase, domain 1"/>
    <property type="match status" value="1"/>
</dbReference>
<dbReference type="Gene3D" id="3.40.640.10">
    <property type="entry name" value="Type I PLP-dependent aspartate aminotransferase-like (Major domain)"/>
    <property type="match status" value="1"/>
</dbReference>
<dbReference type="HAMAP" id="MF_00375">
    <property type="entry name" value="HemL_aminotrans_3"/>
    <property type="match status" value="1"/>
</dbReference>
<dbReference type="InterPro" id="IPR004639">
    <property type="entry name" value="4pyrrol_synth_GluAld_NH2Trfase"/>
</dbReference>
<dbReference type="InterPro" id="IPR005814">
    <property type="entry name" value="Aminotrans_3"/>
</dbReference>
<dbReference type="InterPro" id="IPR049704">
    <property type="entry name" value="Aminotrans_3_PPA_site"/>
</dbReference>
<dbReference type="InterPro" id="IPR015424">
    <property type="entry name" value="PyrdxlP-dep_Trfase"/>
</dbReference>
<dbReference type="InterPro" id="IPR015421">
    <property type="entry name" value="PyrdxlP-dep_Trfase_major"/>
</dbReference>
<dbReference type="InterPro" id="IPR015422">
    <property type="entry name" value="PyrdxlP-dep_Trfase_small"/>
</dbReference>
<dbReference type="NCBIfam" id="TIGR00713">
    <property type="entry name" value="hemL"/>
    <property type="match status" value="1"/>
</dbReference>
<dbReference type="NCBIfam" id="NF000818">
    <property type="entry name" value="PRK00062.1"/>
    <property type="match status" value="1"/>
</dbReference>
<dbReference type="PANTHER" id="PTHR43713">
    <property type="entry name" value="GLUTAMATE-1-SEMIALDEHYDE 2,1-AMINOMUTASE"/>
    <property type="match status" value="1"/>
</dbReference>
<dbReference type="PANTHER" id="PTHR43713:SF3">
    <property type="entry name" value="GLUTAMATE-1-SEMIALDEHYDE 2,1-AMINOMUTASE 1, CHLOROPLASTIC-RELATED"/>
    <property type="match status" value="1"/>
</dbReference>
<dbReference type="Pfam" id="PF00202">
    <property type="entry name" value="Aminotran_3"/>
    <property type="match status" value="1"/>
</dbReference>
<dbReference type="PIRSF" id="PIRSF000521">
    <property type="entry name" value="Transaminase_4ab_Lys_Orn"/>
    <property type="match status" value="1"/>
</dbReference>
<dbReference type="SUPFAM" id="SSF53383">
    <property type="entry name" value="PLP-dependent transferases"/>
    <property type="match status" value="1"/>
</dbReference>
<dbReference type="PROSITE" id="PS00600">
    <property type="entry name" value="AA_TRANSFER_CLASS_3"/>
    <property type="match status" value="1"/>
</dbReference>
<gene>
    <name evidence="1" type="primary">hemL</name>
    <name type="ordered locus">CKL_0658</name>
</gene>
<reference key="1">
    <citation type="journal article" date="2008" name="Proc. Natl. Acad. Sci. U.S.A.">
        <title>The genome of Clostridium kluyveri, a strict anaerobe with unique metabolic features.</title>
        <authorList>
            <person name="Seedorf H."/>
            <person name="Fricke W.F."/>
            <person name="Veith B."/>
            <person name="Brueggemann H."/>
            <person name="Liesegang H."/>
            <person name="Strittmatter A."/>
            <person name="Miethke M."/>
            <person name="Buckel W."/>
            <person name="Hinderberger J."/>
            <person name="Li F."/>
            <person name="Hagemeier C."/>
            <person name="Thauer R.K."/>
            <person name="Gottschalk G."/>
        </authorList>
    </citation>
    <scope>NUCLEOTIDE SEQUENCE [LARGE SCALE GENOMIC DNA]</scope>
    <source>
        <strain>ATCC 8527 / DSM 555 / NBRC 12016 / NCIMB 10680 / K1</strain>
    </source>
</reference>
<accession>A5N5Y1</accession>